<protein>
    <recommendedName>
        <fullName>Peroxiredoxin-2C</fullName>
        <ecNumber evidence="2">1.11.1.25</ecNumber>
    </recommendedName>
    <alternativeName>
        <fullName evidence="5">Glutaredoxin-dependent peroxiredoxin</fullName>
    </alternativeName>
    <alternativeName>
        <fullName>Peroxiredoxin IIC</fullName>
    </alternativeName>
    <alternativeName>
        <fullName>Thioredoxin peroxidase 2C</fullName>
    </alternativeName>
</protein>
<comment type="function">
    <text>Reduces hydrogen peroxide and alkyl hydroperoxides with reducing equivalents provided through the thioredoxin or glutaredoxin system. May be involved in intracellular redox signaling.</text>
</comment>
<comment type="function">
    <text evidence="2">Thiol-specific peroxidase that catalyzes the reduction of hydrogen peroxide and organic hydroperoxides to water and alcohols, respectively. Plays a role in cell protection against oxidative stress by detoxifying peroxides.</text>
</comment>
<comment type="catalytic activity">
    <reaction evidence="2">
        <text>[glutaredoxin]-dithiol + a hydroperoxide = [glutaredoxin]-disulfide + an alcohol + H2O</text>
        <dbReference type="Rhea" id="RHEA:62624"/>
        <dbReference type="Rhea" id="RHEA-COMP:10729"/>
        <dbReference type="Rhea" id="RHEA-COMP:10730"/>
        <dbReference type="ChEBI" id="CHEBI:15377"/>
        <dbReference type="ChEBI" id="CHEBI:29950"/>
        <dbReference type="ChEBI" id="CHEBI:30879"/>
        <dbReference type="ChEBI" id="CHEBI:35924"/>
        <dbReference type="ChEBI" id="CHEBI:50058"/>
        <dbReference type="EC" id="1.11.1.25"/>
    </reaction>
</comment>
<comment type="subunit">
    <text evidence="2">Monomer.</text>
</comment>
<comment type="subcellular location">
    <subcellularLocation>
        <location evidence="2">Cytoplasm</location>
    </subcellularLocation>
</comment>
<comment type="miscellaneous">
    <text evidence="1">The active site is a conserved redox-active cysteine residue, the peroxidatic cysteine (C(P)), which makes the nucleophilic attack on the peroxide substrate. The peroxide oxidizes the C(P)-SH to cysteine sulfenic acid (C(P)-SOH), which then reacts with another cysteine residue, the resolving cysteine (C(R)), to form a disulfide bridge. The disulfide is subsequently reduced by an appropriate electron donor to complete the catalytic cycle. In this 1-Cys peroxiredoxin, no C(R) is present and C(P) instead forms a disulfide with a cysteine from another protein or with a small thiol molecule.</text>
</comment>
<comment type="similarity">
    <text evidence="5">Belongs to the peroxiredoxin family. Prx5 subfamily.</text>
</comment>
<sequence>MAPVAVGDTLPDGQLGWFDGEDKLQQVSVHGLAAGKKVVLFGVPGAFTPTCSNQHVPGFINQAEQLKAKGVDDILLVSVNDPFVMKAWAKSYPENKHVKFLADGLGTYTKALGLELDLSEKGLGIRSRRFALLADNLKVTVANIEEGGQFTISGAEEILKAL</sequence>
<reference key="1">
    <citation type="submission" date="1999-11" db="EMBL/GenBank/DDBJ databases">
        <title>Characterization of a new type of peroxiredoxin from Oryza sativa.</title>
        <authorList>
            <person name="Alegre O."/>
            <person name="Antolin M."/>
            <person name="Imperial S."/>
        </authorList>
    </citation>
    <scope>NUCLEOTIDE SEQUENCE [MRNA]</scope>
    <source>
        <strain>cv. Nipponbare</strain>
    </source>
</reference>
<reference key="2">
    <citation type="journal article" date="2002" name="Nature">
        <title>The genome sequence and structure of rice chromosome 1.</title>
        <authorList>
            <person name="Sasaki T."/>
            <person name="Matsumoto T."/>
            <person name="Yamamoto K."/>
            <person name="Sakata K."/>
            <person name="Baba T."/>
            <person name="Katayose Y."/>
            <person name="Wu J."/>
            <person name="Niimura Y."/>
            <person name="Cheng Z."/>
            <person name="Nagamura Y."/>
            <person name="Antonio B.A."/>
            <person name="Kanamori H."/>
            <person name="Hosokawa S."/>
            <person name="Masukawa M."/>
            <person name="Arikawa K."/>
            <person name="Chiden Y."/>
            <person name="Hayashi M."/>
            <person name="Okamoto M."/>
            <person name="Ando T."/>
            <person name="Aoki H."/>
            <person name="Arita K."/>
            <person name="Hamada M."/>
            <person name="Harada C."/>
            <person name="Hijishita S."/>
            <person name="Honda M."/>
            <person name="Ichikawa Y."/>
            <person name="Idonuma A."/>
            <person name="Iijima M."/>
            <person name="Ikeda M."/>
            <person name="Ikeno M."/>
            <person name="Ito S."/>
            <person name="Ito T."/>
            <person name="Ito Y."/>
            <person name="Ito Y."/>
            <person name="Iwabuchi A."/>
            <person name="Kamiya K."/>
            <person name="Karasawa W."/>
            <person name="Katagiri S."/>
            <person name="Kikuta A."/>
            <person name="Kobayashi N."/>
            <person name="Kono I."/>
            <person name="Machita K."/>
            <person name="Maehara T."/>
            <person name="Mizuno H."/>
            <person name="Mizubayashi T."/>
            <person name="Mukai Y."/>
            <person name="Nagasaki H."/>
            <person name="Nakashima M."/>
            <person name="Nakama Y."/>
            <person name="Nakamichi Y."/>
            <person name="Nakamura M."/>
            <person name="Namiki N."/>
            <person name="Negishi M."/>
            <person name="Ohta I."/>
            <person name="Ono N."/>
            <person name="Saji S."/>
            <person name="Sakai K."/>
            <person name="Shibata M."/>
            <person name="Shimokawa T."/>
            <person name="Shomura A."/>
            <person name="Song J."/>
            <person name="Takazaki Y."/>
            <person name="Terasawa K."/>
            <person name="Tsuji K."/>
            <person name="Waki K."/>
            <person name="Yamagata H."/>
            <person name="Yamane H."/>
            <person name="Yoshiki S."/>
            <person name="Yoshihara R."/>
            <person name="Yukawa K."/>
            <person name="Zhong H."/>
            <person name="Iwama H."/>
            <person name="Endo T."/>
            <person name="Ito H."/>
            <person name="Hahn J.H."/>
            <person name="Kim H.-I."/>
            <person name="Eun M.-Y."/>
            <person name="Yano M."/>
            <person name="Jiang J."/>
            <person name="Gojobori T."/>
        </authorList>
    </citation>
    <scope>NUCLEOTIDE SEQUENCE [LARGE SCALE GENOMIC DNA]</scope>
    <source>
        <strain>cv. Nipponbare</strain>
    </source>
</reference>
<reference key="3">
    <citation type="journal article" date="2005" name="Nature">
        <title>The map-based sequence of the rice genome.</title>
        <authorList>
            <consortium name="International rice genome sequencing project (IRGSP)"/>
        </authorList>
    </citation>
    <scope>NUCLEOTIDE SEQUENCE [LARGE SCALE GENOMIC DNA]</scope>
    <source>
        <strain>cv. Nipponbare</strain>
    </source>
</reference>
<reference key="4">
    <citation type="journal article" date="2008" name="Nucleic Acids Res.">
        <title>The rice annotation project database (RAP-DB): 2008 update.</title>
        <authorList>
            <consortium name="The rice annotation project (RAP)"/>
        </authorList>
    </citation>
    <scope>GENOME REANNOTATION</scope>
    <source>
        <strain>cv. Nipponbare</strain>
    </source>
</reference>
<reference key="5">
    <citation type="journal article" date="2013" name="Rice">
        <title>Improvement of the Oryza sativa Nipponbare reference genome using next generation sequence and optical map data.</title>
        <authorList>
            <person name="Kawahara Y."/>
            <person name="de la Bastide M."/>
            <person name="Hamilton J.P."/>
            <person name="Kanamori H."/>
            <person name="McCombie W.R."/>
            <person name="Ouyang S."/>
            <person name="Schwartz D.C."/>
            <person name="Tanaka T."/>
            <person name="Wu J."/>
            <person name="Zhou S."/>
            <person name="Childs K.L."/>
            <person name="Davidson R.M."/>
            <person name="Lin H."/>
            <person name="Quesada-Ocampo L."/>
            <person name="Vaillancourt B."/>
            <person name="Sakai H."/>
            <person name="Lee S.S."/>
            <person name="Kim J."/>
            <person name="Numa H."/>
            <person name="Itoh T."/>
            <person name="Buell C.R."/>
            <person name="Matsumoto T."/>
        </authorList>
    </citation>
    <scope>GENOME REANNOTATION</scope>
    <source>
        <strain>cv. Nipponbare</strain>
    </source>
</reference>
<reference key="6">
    <citation type="journal article" date="2005" name="PLoS Biol.">
        <title>The genomes of Oryza sativa: a history of duplications.</title>
        <authorList>
            <person name="Yu J."/>
            <person name="Wang J."/>
            <person name="Lin W."/>
            <person name="Li S."/>
            <person name="Li H."/>
            <person name="Zhou J."/>
            <person name="Ni P."/>
            <person name="Dong W."/>
            <person name="Hu S."/>
            <person name="Zeng C."/>
            <person name="Zhang J."/>
            <person name="Zhang Y."/>
            <person name="Li R."/>
            <person name="Xu Z."/>
            <person name="Li S."/>
            <person name="Li X."/>
            <person name="Zheng H."/>
            <person name="Cong L."/>
            <person name="Lin L."/>
            <person name="Yin J."/>
            <person name="Geng J."/>
            <person name="Li G."/>
            <person name="Shi J."/>
            <person name="Liu J."/>
            <person name="Lv H."/>
            <person name="Li J."/>
            <person name="Wang J."/>
            <person name="Deng Y."/>
            <person name="Ran L."/>
            <person name="Shi X."/>
            <person name="Wang X."/>
            <person name="Wu Q."/>
            <person name="Li C."/>
            <person name="Ren X."/>
            <person name="Wang J."/>
            <person name="Wang X."/>
            <person name="Li D."/>
            <person name="Liu D."/>
            <person name="Zhang X."/>
            <person name="Ji Z."/>
            <person name="Zhao W."/>
            <person name="Sun Y."/>
            <person name="Zhang Z."/>
            <person name="Bao J."/>
            <person name="Han Y."/>
            <person name="Dong L."/>
            <person name="Ji J."/>
            <person name="Chen P."/>
            <person name="Wu S."/>
            <person name="Liu J."/>
            <person name="Xiao Y."/>
            <person name="Bu D."/>
            <person name="Tan J."/>
            <person name="Yang L."/>
            <person name="Ye C."/>
            <person name="Zhang J."/>
            <person name="Xu J."/>
            <person name="Zhou Y."/>
            <person name="Yu Y."/>
            <person name="Zhang B."/>
            <person name="Zhuang S."/>
            <person name="Wei H."/>
            <person name="Liu B."/>
            <person name="Lei M."/>
            <person name="Yu H."/>
            <person name="Li Y."/>
            <person name="Xu H."/>
            <person name="Wei S."/>
            <person name="He X."/>
            <person name="Fang L."/>
            <person name="Zhang Z."/>
            <person name="Zhang Y."/>
            <person name="Huang X."/>
            <person name="Su Z."/>
            <person name="Tong W."/>
            <person name="Li J."/>
            <person name="Tong Z."/>
            <person name="Li S."/>
            <person name="Ye J."/>
            <person name="Wang L."/>
            <person name="Fang L."/>
            <person name="Lei T."/>
            <person name="Chen C.-S."/>
            <person name="Chen H.-C."/>
            <person name="Xu Z."/>
            <person name="Li H."/>
            <person name="Huang H."/>
            <person name="Zhang F."/>
            <person name="Xu H."/>
            <person name="Li N."/>
            <person name="Zhao C."/>
            <person name="Li S."/>
            <person name="Dong L."/>
            <person name="Huang Y."/>
            <person name="Li L."/>
            <person name="Xi Y."/>
            <person name="Qi Q."/>
            <person name="Li W."/>
            <person name="Zhang B."/>
            <person name="Hu W."/>
            <person name="Zhang Y."/>
            <person name="Tian X."/>
            <person name="Jiao Y."/>
            <person name="Liang X."/>
            <person name="Jin J."/>
            <person name="Gao L."/>
            <person name="Zheng W."/>
            <person name="Hao B."/>
            <person name="Liu S.-M."/>
            <person name="Wang W."/>
            <person name="Yuan L."/>
            <person name="Cao M."/>
            <person name="McDermott J."/>
            <person name="Samudrala R."/>
            <person name="Wang J."/>
            <person name="Wong G.K.-S."/>
            <person name="Yang H."/>
        </authorList>
    </citation>
    <scope>NUCLEOTIDE SEQUENCE [LARGE SCALE GENOMIC DNA]</scope>
    <source>
        <strain>cv. Nipponbare</strain>
    </source>
</reference>
<reference key="7">
    <citation type="journal article" date="2003" name="Science">
        <title>Collection, mapping, and annotation of over 28,000 cDNA clones from japonica rice.</title>
        <authorList>
            <consortium name="The rice full-length cDNA consortium"/>
        </authorList>
    </citation>
    <scope>NUCLEOTIDE SEQUENCE [LARGE SCALE MRNA]</scope>
    <source>
        <strain>cv. Nipponbare</strain>
    </source>
</reference>
<reference key="8">
    <citation type="journal article" date="2006" name="Proteomics">
        <title>Proteomic analysis of rice leaf, stem and root tissues during growth course.</title>
        <authorList>
            <person name="Nozu Y."/>
            <person name="Tsugita A."/>
            <person name="Kamijo K."/>
        </authorList>
    </citation>
    <scope>PROTEIN SEQUENCE [LARGE SCALE ANALYSIS] OF 2-8</scope>
    <scope>IDENTIFICATION BY MASS SPECTROMETRY</scope>
    <source>
        <strain>cv. Nipponbare</strain>
    </source>
</reference>
<dbReference type="EC" id="1.11.1.25" evidence="2"/>
<dbReference type="EMBL" id="AF203879">
    <property type="protein sequence ID" value="AAG40130.1"/>
    <property type="molecule type" value="mRNA"/>
</dbReference>
<dbReference type="EMBL" id="AP003264">
    <property type="protein sequence ID" value="BAC01192.1"/>
    <property type="molecule type" value="Genomic_DNA"/>
</dbReference>
<dbReference type="EMBL" id="AP003374">
    <property type="protein sequence ID" value="BAB93323.1"/>
    <property type="molecule type" value="Genomic_DNA"/>
</dbReference>
<dbReference type="EMBL" id="AP008207">
    <property type="protein sequence ID" value="BAF05759.1"/>
    <property type="molecule type" value="Genomic_DNA"/>
</dbReference>
<dbReference type="EMBL" id="AP014957">
    <property type="protein sequence ID" value="BAS73651.1"/>
    <property type="molecule type" value="Genomic_DNA"/>
</dbReference>
<dbReference type="EMBL" id="CM000138">
    <property type="protein sequence ID" value="EAZ13066.1"/>
    <property type="molecule type" value="Genomic_DNA"/>
</dbReference>
<dbReference type="EMBL" id="AK058509">
    <property type="protein sequence ID" value="BAG86716.1"/>
    <property type="molecule type" value="mRNA"/>
</dbReference>
<dbReference type="RefSeq" id="XP_015622003.1">
    <property type="nucleotide sequence ID" value="XM_015766517.1"/>
</dbReference>
<dbReference type="SMR" id="Q9FR35"/>
<dbReference type="FunCoup" id="Q9FR35">
    <property type="interactions" value="1865"/>
</dbReference>
<dbReference type="STRING" id="39947.Q9FR35"/>
<dbReference type="PeroxiBase" id="4017">
    <property type="entry name" value="OsPrxII03"/>
</dbReference>
<dbReference type="PaxDb" id="39947-Q9FR35"/>
<dbReference type="EnsemblPlants" id="Os01t0675100-01">
    <property type="protein sequence ID" value="Os01t0675100-01"/>
    <property type="gene ID" value="Os01g0675100"/>
</dbReference>
<dbReference type="Gramene" id="Os01t0675100-01">
    <property type="protein sequence ID" value="Os01t0675100-01"/>
    <property type="gene ID" value="Os01g0675100"/>
</dbReference>
<dbReference type="KEGG" id="dosa:Os01g0675100"/>
<dbReference type="eggNOG" id="KOG0541">
    <property type="taxonomic scope" value="Eukaryota"/>
</dbReference>
<dbReference type="HOGENOM" id="CLU_072440_1_2_1"/>
<dbReference type="InParanoid" id="Q9FR35"/>
<dbReference type="OMA" id="SAWGKQH"/>
<dbReference type="OrthoDB" id="1882547at2759"/>
<dbReference type="Proteomes" id="UP000000763">
    <property type="component" value="Chromosome 1"/>
</dbReference>
<dbReference type="Proteomes" id="UP000007752">
    <property type="component" value="Chromosome 1"/>
</dbReference>
<dbReference type="Proteomes" id="UP000059680">
    <property type="component" value="Chromosome 1"/>
</dbReference>
<dbReference type="GO" id="GO:0005737">
    <property type="term" value="C:cytoplasm"/>
    <property type="evidence" value="ECO:0000318"/>
    <property type="project" value="GO_Central"/>
</dbReference>
<dbReference type="GO" id="GO:0008379">
    <property type="term" value="F:thioredoxin peroxidase activity"/>
    <property type="evidence" value="ECO:0000318"/>
    <property type="project" value="GO_Central"/>
</dbReference>
<dbReference type="GO" id="GO:0045454">
    <property type="term" value="P:cell redox homeostasis"/>
    <property type="evidence" value="ECO:0000318"/>
    <property type="project" value="GO_Central"/>
</dbReference>
<dbReference type="GO" id="GO:0034599">
    <property type="term" value="P:cellular response to oxidative stress"/>
    <property type="evidence" value="ECO:0000318"/>
    <property type="project" value="GO_Central"/>
</dbReference>
<dbReference type="GO" id="GO:0042744">
    <property type="term" value="P:hydrogen peroxide catabolic process"/>
    <property type="evidence" value="ECO:0000318"/>
    <property type="project" value="GO_Central"/>
</dbReference>
<dbReference type="CDD" id="cd03013">
    <property type="entry name" value="PRX5_like"/>
    <property type="match status" value="1"/>
</dbReference>
<dbReference type="FunFam" id="3.40.30.10:FF:000020">
    <property type="entry name" value="Peroxiredoxin"/>
    <property type="match status" value="1"/>
</dbReference>
<dbReference type="Gene3D" id="3.40.30.10">
    <property type="entry name" value="Glutaredoxin"/>
    <property type="match status" value="1"/>
</dbReference>
<dbReference type="InterPro" id="IPR037944">
    <property type="entry name" value="PRX5-like"/>
</dbReference>
<dbReference type="InterPro" id="IPR013740">
    <property type="entry name" value="Redoxin"/>
</dbReference>
<dbReference type="InterPro" id="IPR036249">
    <property type="entry name" value="Thioredoxin-like_sf"/>
</dbReference>
<dbReference type="InterPro" id="IPR013766">
    <property type="entry name" value="Thioredoxin_domain"/>
</dbReference>
<dbReference type="PANTHER" id="PTHR10430">
    <property type="entry name" value="PEROXIREDOXIN"/>
    <property type="match status" value="1"/>
</dbReference>
<dbReference type="PANTHER" id="PTHR10430:SF8">
    <property type="entry name" value="PEROXIREDOXIN-2A-RELATED"/>
    <property type="match status" value="1"/>
</dbReference>
<dbReference type="Pfam" id="PF08534">
    <property type="entry name" value="Redoxin"/>
    <property type="match status" value="1"/>
</dbReference>
<dbReference type="SUPFAM" id="SSF52833">
    <property type="entry name" value="Thioredoxin-like"/>
    <property type="match status" value="1"/>
</dbReference>
<dbReference type="PROSITE" id="PS51352">
    <property type="entry name" value="THIOREDOXIN_2"/>
    <property type="match status" value="1"/>
</dbReference>
<accession>Q9FR35</accession>
<accession>B7E2W9</accession>
<accession>Q7F529</accession>
<proteinExistence type="evidence at protein level"/>
<gene>
    <name type="primary">PRXIIC</name>
    <name type="ordered locus">Os01g0675100</name>
    <name type="ordered locus">LOC_Os01g48420</name>
    <name type="ORF">OJ1117_G01.9</name>
    <name type="ORF">OsJ_002891</name>
    <name type="ORF">P0485G01.43</name>
</gene>
<organism>
    <name type="scientific">Oryza sativa subsp. japonica</name>
    <name type="common">Rice</name>
    <dbReference type="NCBI Taxonomy" id="39947"/>
    <lineage>
        <taxon>Eukaryota</taxon>
        <taxon>Viridiplantae</taxon>
        <taxon>Streptophyta</taxon>
        <taxon>Embryophyta</taxon>
        <taxon>Tracheophyta</taxon>
        <taxon>Spermatophyta</taxon>
        <taxon>Magnoliopsida</taxon>
        <taxon>Liliopsida</taxon>
        <taxon>Poales</taxon>
        <taxon>Poaceae</taxon>
        <taxon>BOP clade</taxon>
        <taxon>Oryzoideae</taxon>
        <taxon>Oryzeae</taxon>
        <taxon>Oryzinae</taxon>
        <taxon>Oryza</taxon>
        <taxon>Oryza sativa</taxon>
    </lineage>
</organism>
<keyword id="KW-0049">Antioxidant</keyword>
<keyword id="KW-0963">Cytoplasm</keyword>
<keyword id="KW-0903">Direct protein sequencing</keyword>
<keyword id="KW-0560">Oxidoreductase</keyword>
<keyword id="KW-0575">Peroxidase</keyword>
<keyword id="KW-0676">Redox-active center</keyword>
<keyword id="KW-1185">Reference proteome</keyword>
<name>PRX2C_ORYSJ</name>
<feature type="initiator methionine" description="Removed" evidence="4">
    <location>
        <position position="1"/>
    </location>
</feature>
<feature type="chain" id="PRO_0000282282" description="Peroxiredoxin-2C">
    <location>
        <begin position="2"/>
        <end position="162"/>
    </location>
</feature>
<feature type="domain" description="Thioredoxin" evidence="3">
    <location>
        <begin position="4"/>
        <end position="162"/>
    </location>
</feature>
<feature type="active site" description="Cysteine sulfenic acid (-SOH) intermediate" evidence="1">
    <location>
        <position position="51"/>
    </location>
</feature>
<evidence type="ECO:0000250" key="1">
    <source>
        <dbReference type="UniProtKB" id="A9PCL4"/>
    </source>
</evidence>
<evidence type="ECO:0000250" key="2">
    <source>
        <dbReference type="UniProtKB" id="Q9SRZ4"/>
    </source>
</evidence>
<evidence type="ECO:0000255" key="3">
    <source>
        <dbReference type="PROSITE-ProRule" id="PRU00691"/>
    </source>
</evidence>
<evidence type="ECO:0000269" key="4">
    <source>
    </source>
</evidence>
<evidence type="ECO:0000305" key="5"/>